<evidence type="ECO:0000255" key="1">
    <source>
        <dbReference type="HAMAP-Rule" id="MF_00294"/>
    </source>
</evidence>
<organism>
    <name type="scientific">Sorangium cellulosum (strain So ce56)</name>
    <name type="common">Polyangium cellulosum (strain So ce56)</name>
    <dbReference type="NCBI Taxonomy" id="448385"/>
    <lineage>
        <taxon>Bacteria</taxon>
        <taxon>Pseudomonadati</taxon>
        <taxon>Myxococcota</taxon>
        <taxon>Polyangia</taxon>
        <taxon>Polyangiales</taxon>
        <taxon>Polyangiaceae</taxon>
        <taxon>Sorangium</taxon>
    </lineage>
</organism>
<protein>
    <recommendedName>
        <fullName evidence="1">Large ribosomal subunit protein bL33C</fullName>
    </recommendedName>
    <alternativeName>
        <fullName evidence="1">50S ribosomal protein L33 3</fullName>
    </alternativeName>
</protein>
<reference key="1">
    <citation type="journal article" date="2007" name="Nat. Biotechnol.">
        <title>Complete genome sequence of the myxobacterium Sorangium cellulosum.</title>
        <authorList>
            <person name="Schneiker S."/>
            <person name="Perlova O."/>
            <person name="Kaiser O."/>
            <person name="Gerth K."/>
            <person name="Alici A."/>
            <person name="Altmeyer M.O."/>
            <person name="Bartels D."/>
            <person name="Bekel T."/>
            <person name="Beyer S."/>
            <person name="Bode E."/>
            <person name="Bode H.B."/>
            <person name="Bolten C.J."/>
            <person name="Choudhuri J.V."/>
            <person name="Doss S."/>
            <person name="Elnakady Y.A."/>
            <person name="Frank B."/>
            <person name="Gaigalat L."/>
            <person name="Goesmann A."/>
            <person name="Groeger C."/>
            <person name="Gross F."/>
            <person name="Jelsbak L."/>
            <person name="Jelsbak L."/>
            <person name="Kalinowski J."/>
            <person name="Kegler C."/>
            <person name="Knauber T."/>
            <person name="Konietzny S."/>
            <person name="Kopp M."/>
            <person name="Krause L."/>
            <person name="Krug D."/>
            <person name="Linke B."/>
            <person name="Mahmud T."/>
            <person name="Martinez-Arias R."/>
            <person name="McHardy A.C."/>
            <person name="Merai M."/>
            <person name="Meyer F."/>
            <person name="Mormann S."/>
            <person name="Munoz-Dorado J."/>
            <person name="Perez J."/>
            <person name="Pradella S."/>
            <person name="Rachid S."/>
            <person name="Raddatz G."/>
            <person name="Rosenau F."/>
            <person name="Rueckert C."/>
            <person name="Sasse F."/>
            <person name="Scharfe M."/>
            <person name="Schuster S.C."/>
            <person name="Suen G."/>
            <person name="Treuner-Lange A."/>
            <person name="Velicer G.J."/>
            <person name="Vorholter F.-J."/>
            <person name="Weissman K.J."/>
            <person name="Welch R.D."/>
            <person name="Wenzel S.C."/>
            <person name="Whitworth D.E."/>
            <person name="Wilhelm S."/>
            <person name="Wittmann C."/>
            <person name="Bloecker H."/>
            <person name="Puehler A."/>
            <person name="Mueller R."/>
        </authorList>
    </citation>
    <scope>NUCLEOTIDE SEQUENCE [LARGE SCALE GENOMIC DNA]</scope>
    <source>
        <strain>So ce56</strain>
    </source>
</reference>
<comment type="similarity">
    <text evidence="1">Belongs to the bacterial ribosomal protein bL33 family.</text>
</comment>
<keyword id="KW-1185">Reference proteome</keyword>
<keyword id="KW-0687">Ribonucleoprotein</keyword>
<keyword id="KW-0689">Ribosomal protein</keyword>
<sequence>MRDVIKLVSSAGTGHCYYTTKNKRTMTEKMQMKKYDPIARKHVIFTEGKISKGGGK</sequence>
<dbReference type="EMBL" id="AM746676">
    <property type="protein sequence ID" value="CAN98415.1"/>
    <property type="molecule type" value="Genomic_DNA"/>
</dbReference>
<dbReference type="RefSeq" id="WP_012240854.1">
    <property type="nucleotide sequence ID" value="NC_010162.1"/>
</dbReference>
<dbReference type="SMR" id="A9FNE0"/>
<dbReference type="STRING" id="448385.sce8245"/>
<dbReference type="KEGG" id="scl:sce8245"/>
<dbReference type="eggNOG" id="COG0267">
    <property type="taxonomic scope" value="Bacteria"/>
</dbReference>
<dbReference type="HOGENOM" id="CLU_190949_1_1_7"/>
<dbReference type="OrthoDB" id="21586at2"/>
<dbReference type="BioCyc" id="SCEL448385:SCE_RS42235-MONOMER"/>
<dbReference type="Proteomes" id="UP000002139">
    <property type="component" value="Chromosome"/>
</dbReference>
<dbReference type="GO" id="GO:0022625">
    <property type="term" value="C:cytosolic large ribosomal subunit"/>
    <property type="evidence" value="ECO:0007669"/>
    <property type="project" value="TreeGrafter"/>
</dbReference>
<dbReference type="GO" id="GO:0003735">
    <property type="term" value="F:structural constituent of ribosome"/>
    <property type="evidence" value="ECO:0007669"/>
    <property type="project" value="InterPro"/>
</dbReference>
<dbReference type="GO" id="GO:0006412">
    <property type="term" value="P:translation"/>
    <property type="evidence" value="ECO:0007669"/>
    <property type="project" value="UniProtKB-UniRule"/>
</dbReference>
<dbReference type="Gene3D" id="2.20.28.120">
    <property type="entry name" value="Ribosomal protein L33"/>
    <property type="match status" value="1"/>
</dbReference>
<dbReference type="HAMAP" id="MF_00294">
    <property type="entry name" value="Ribosomal_bL33"/>
    <property type="match status" value="1"/>
</dbReference>
<dbReference type="InterPro" id="IPR001705">
    <property type="entry name" value="Ribosomal_bL33"/>
</dbReference>
<dbReference type="InterPro" id="IPR018264">
    <property type="entry name" value="Ribosomal_bL33_CS"/>
</dbReference>
<dbReference type="InterPro" id="IPR038584">
    <property type="entry name" value="Ribosomal_bL33_sf"/>
</dbReference>
<dbReference type="InterPro" id="IPR011332">
    <property type="entry name" value="Ribosomal_zn-bd"/>
</dbReference>
<dbReference type="NCBIfam" id="NF001860">
    <property type="entry name" value="PRK00595.1"/>
    <property type="match status" value="1"/>
</dbReference>
<dbReference type="NCBIfam" id="TIGR01023">
    <property type="entry name" value="rpmG_bact"/>
    <property type="match status" value="1"/>
</dbReference>
<dbReference type="PANTHER" id="PTHR15238">
    <property type="entry name" value="54S RIBOSOMAL PROTEIN L39, MITOCHONDRIAL"/>
    <property type="match status" value="1"/>
</dbReference>
<dbReference type="PANTHER" id="PTHR15238:SF1">
    <property type="entry name" value="LARGE RIBOSOMAL SUBUNIT PROTEIN BL33M"/>
    <property type="match status" value="1"/>
</dbReference>
<dbReference type="Pfam" id="PF00471">
    <property type="entry name" value="Ribosomal_L33"/>
    <property type="match status" value="1"/>
</dbReference>
<dbReference type="SUPFAM" id="SSF57829">
    <property type="entry name" value="Zn-binding ribosomal proteins"/>
    <property type="match status" value="1"/>
</dbReference>
<dbReference type="PROSITE" id="PS00582">
    <property type="entry name" value="RIBOSOMAL_L33"/>
    <property type="match status" value="1"/>
</dbReference>
<feature type="chain" id="PRO_0000356673" description="Large ribosomal subunit protein bL33C">
    <location>
        <begin position="1"/>
        <end position="56"/>
    </location>
</feature>
<gene>
    <name evidence="1" type="primary">rpmG3</name>
    <name type="ordered locus">sce8245</name>
</gene>
<name>RL333_SORC5</name>
<proteinExistence type="inferred from homology"/>
<accession>A9FNE0</accession>